<organism>
    <name type="scientific">Bacteroides fragilis (strain ATCC 25285 / DSM 2151 / CCUG 4856 / JCM 11019 / LMG 10263 / NCTC 9343 / Onslow / VPI 2553 / EN-2)</name>
    <dbReference type="NCBI Taxonomy" id="272559"/>
    <lineage>
        <taxon>Bacteria</taxon>
        <taxon>Pseudomonadati</taxon>
        <taxon>Bacteroidota</taxon>
        <taxon>Bacteroidia</taxon>
        <taxon>Bacteroidales</taxon>
        <taxon>Bacteroidaceae</taxon>
        <taxon>Bacteroides</taxon>
    </lineage>
</organism>
<feature type="chain" id="PRO_0000083645" description="3-isopropylmalate dehydrogenase">
    <location>
        <begin position="1"/>
        <end position="353"/>
    </location>
</feature>
<feature type="binding site" evidence="1">
    <location>
        <position position="97"/>
    </location>
    <ligand>
        <name>substrate</name>
    </ligand>
</feature>
<feature type="binding site" evidence="1">
    <location>
        <position position="107"/>
    </location>
    <ligand>
        <name>substrate</name>
    </ligand>
</feature>
<feature type="binding site" evidence="1">
    <location>
        <position position="135"/>
    </location>
    <ligand>
        <name>substrate</name>
    </ligand>
</feature>
<feature type="binding site" evidence="1">
    <location>
        <position position="219"/>
    </location>
    <ligand>
        <name>Mg(2+)</name>
        <dbReference type="ChEBI" id="CHEBI:18420"/>
    </ligand>
</feature>
<feature type="binding site" evidence="1">
    <location>
        <position position="219"/>
    </location>
    <ligand>
        <name>substrate</name>
    </ligand>
</feature>
<feature type="binding site" evidence="1">
    <location>
        <position position="243"/>
    </location>
    <ligand>
        <name>Mg(2+)</name>
        <dbReference type="ChEBI" id="CHEBI:18420"/>
    </ligand>
</feature>
<feature type="binding site" evidence="1">
    <location>
        <position position="247"/>
    </location>
    <ligand>
        <name>Mg(2+)</name>
        <dbReference type="ChEBI" id="CHEBI:18420"/>
    </ligand>
</feature>
<feature type="site" description="Important for catalysis" evidence="1">
    <location>
        <position position="142"/>
    </location>
</feature>
<feature type="site" description="Important for catalysis" evidence="1">
    <location>
        <position position="187"/>
    </location>
</feature>
<keyword id="KW-0028">Amino-acid biosynthesis</keyword>
<keyword id="KW-0100">Branched-chain amino acid biosynthesis</keyword>
<keyword id="KW-0963">Cytoplasm</keyword>
<keyword id="KW-0432">Leucine biosynthesis</keyword>
<keyword id="KW-0460">Magnesium</keyword>
<keyword id="KW-0464">Manganese</keyword>
<keyword id="KW-0479">Metal-binding</keyword>
<keyword id="KW-0520">NAD</keyword>
<keyword id="KW-0560">Oxidoreductase</keyword>
<proteinExistence type="inferred from homology"/>
<sequence length="353" mass="39098">MDFKIAVLAGDGIGPEISVQGVEVMSAVCEKFGHKVNYEYAICGADAIDKVGDPFPEETYRVCKNADAVLFSAVGDPKFDNDPTAKVRPEQGLLAMRKKLGLFANIRPVQTFKCLVHKSPLRAELVEGADFLCIRELTGGMYFGEKYQDNDKAYDTNMYTRPEIERILKVGFEYAMKRRKHLTVVDKANVLASSRLWRQIAQEMAPQYPEVTTDYMFVDNAAMKMIQEPKFFDVMVTENTFGDILTDEGSVISGSMGLLPSASTGESTPVFEPIHGSWPQAKGLNIANPLAQILSVAMLFEYFDCKAEGALIRKAVDASLDANVRTPEIQVEGGEKFGTKEVGAWIVDYIRKA</sequence>
<evidence type="ECO:0000255" key="1">
    <source>
        <dbReference type="HAMAP-Rule" id="MF_01033"/>
    </source>
</evidence>
<comment type="function">
    <text evidence="1">Catalyzes the oxidation of 3-carboxy-2-hydroxy-4-methylpentanoate (3-isopropylmalate) to 3-carboxy-4-methyl-2-oxopentanoate. The product decarboxylates to 4-methyl-2 oxopentanoate.</text>
</comment>
<comment type="catalytic activity">
    <reaction evidence="1">
        <text>(2R,3S)-3-isopropylmalate + NAD(+) = 4-methyl-2-oxopentanoate + CO2 + NADH</text>
        <dbReference type="Rhea" id="RHEA:32271"/>
        <dbReference type="ChEBI" id="CHEBI:16526"/>
        <dbReference type="ChEBI" id="CHEBI:17865"/>
        <dbReference type="ChEBI" id="CHEBI:35121"/>
        <dbReference type="ChEBI" id="CHEBI:57540"/>
        <dbReference type="ChEBI" id="CHEBI:57945"/>
        <dbReference type="EC" id="1.1.1.85"/>
    </reaction>
</comment>
<comment type="cofactor">
    <cofactor evidence="1">
        <name>Mg(2+)</name>
        <dbReference type="ChEBI" id="CHEBI:18420"/>
    </cofactor>
    <cofactor evidence="1">
        <name>Mn(2+)</name>
        <dbReference type="ChEBI" id="CHEBI:29035"/>
    </cofactor>
    <text evidence="1">Binds 1 Mg(2+) or Mn(2+) ion per subunit.</text>
</comment>
<comment type="pathway">
    <text evidence="1">Amino-acid biosynthesis; L-leucine biosynthesis; L-leucine from 3-methyl-2-oxobutanoate: step 3/4.</text>
</comment>
<comment type="subunit">
    <text evidence="1">Homodimer.</text>
</comment>
<comment type="subcellular location">
    <subcellularLocation>
        <location evidence="1">Cytoplasm</location>
    </subcellularLocation>
</comment>
<comment type="similarity">
    <text evidence="1">Belongs to the isocitrate and isopropylmalate dehydrogenases family. LeuB type 1 subfamily.</text>
</comment>
<protein>
    <recommendedName>
        <fullName evidence="1">3-isopropylmalate dehydrogenase</fullName>
        <ecNumber evidence="1">1.1.1.85</ecNumber>
    </recommendedName>
    <alternativeName>
        <fullName evidence="1">3-IPM-DH</fullName>
    </alternativeName>
    <alternativeName>
        <fullName evidence="1">Beta-IPM dehydrogenase</fullName>
        <shortName evidence="1">IMDH</shortName>
    </alternativeName>
</protein>
<accession>Q5LAB4</accession>
<dbReference type="EC" id="1.1.1.85" evidence="1"/>
<dbReference type="EMBL" id="CR626927">
    <property type="protein sequence ID" value="CAH08959.1"/>
    <property type="molecule type" value="Genomic_DNA"/>
</dbReference>
<dbReference type="RefSeq" id="WP_005789841.1">
    <property type="nucleotide sequence ID" value="NZ_UFTH01000001.1"/>
</dbReference>
<dbReference type="SMR" id="Q5LAB4"/>
<dbReference type="PaxDb" id="272559-BF9343_3178"/>
<dbReference type="GeneID" id="60367175"/>
<dbReference type="KEGG" id="bfs:BF9343_3178"/>
<dbReference type="eggNOG" id="COG0473">
    <property type="taxonomic scope" value="Bacteria"/>
</dbReference>
<dbReference type="HOGENOM" id="CLU_031953_0_3_10"/>
<dbReference type="UniPathway" id="UPA00048">
    <property type="reaction ID" value="UER00072"/>
</dbReference>
<dbReference type="Proteomes" id="UP000006731">
    <property type="component" value="Chromosome"/>
</dbReference>
<dbReference type="GO" id="GO:0005829">
    <property type="term" value="C:cytosol"/>
    <property type="evidence" value="ECO:0007669"/>
    <property type="project" value="TreeGrafter"/>
</dbReference>
<dbReference type="GO" id="GO:0003862">
    <property type="term" value="F:3-isopropylmalate dehydrogenase activity"/>
    <property type="evidence" value="ECO:0007669"/>
    <property type="project" value="UniProtKB-UniRule"/>
</dbReference>
<dbReference type="GO" id="GO:0000287">
    <property type="term" value="F:magnesium ion binding"/>
    <property type="evidence" value="ECO:0007669"/>
    <property type="project" value="InterPro"/>
</dbReference>
<dbReference type="GO" id="GO:0051287">
    <property type="term" value="F:NAD binding"/>
    <property type="evidence" value="ECO:0007669"/>
    <property type="project" value="InterPro"/>
</dbReference>
<dbReference type="GO" id="GO:0009098">
    <property type="term" value="P:L-leucine biosynthetic process"/>
    <property type="evidence" value="ECO:0007669"/>
    <property type="project" value="UniProtKB-UniRule"/>
</dbReference>
<dbReference type="FunFam" id="3.40.718.10:FF:000006">
    <property type="entry name" value="3-isopropylmalate dehydrogenase"/>
    <property type="match status" value="1"/>
</dbReference>
<dbReference type="Gene3D" id="3.40.718.10">
    <property type="entry name" value="Isopropylmalate Dehydrogenase"/>
    <property type="match status" value="1"/>
</dbReference>
<dbReference type="HAMAP" id="MF_01033">
    <property type="entry name" value="LeuB_type1"/>
    <property type="match status" value="1"/>
</dbReference>
<dbReference type="InterPro" id="IPR019818">
    <property type="entry name" value="IsoCit/isopropylmalate_DH_CS"/>
</dbReference>
<dbReference type="InterPro" id="IPR024084">
    <property type="entry name" value="IsoPropMal-DH-like_dom"/>
</dbReference>
<dbReference type="InterPro" id="IPR004429">
    <property type="entry name" value="Isopropylmalate_DH"/>
</dbReference>
<dbReference type="NCBIfam" id="TIGR00169">
    <property type="entry name" value="leuB"/>
    <property type="match status" value="1"/>
</dbReference>
<dbReference type="PANTHER" id="PTHR42979">
    <property type="entry name" value="3-ISOPROPYLMALATE DEHYDROGENASE"/>
    <property type="match status" value="1"/>
</dbReference>
<dbReference type="PANTHER" id="PTHR42979:SF1">
    <property type="entry name" value="3-ISOPROPYLMALATE DEHYDROGENASE"/>
    <property type="match status" value="1"/>
</dbReference>
<dbReference type="Pfam" id="PF00180">
    <property type="entry name" value="Iso_dh"/>
    <property type="match status" value="1"/>
</dbReference>
<dbReference type="SMART" id="SM01329">
    <property type="entry name" value="Iso_dh"/>
    <property type="match status" value="1"/>
</dbReference>
<dbReference type="SUPFAM" id="SSF53659">
    <property type="entry name" value="Isocitrate/Isopropylmalate dehydrogenase-like"/>
    <property type="match status" value="1"/>
</dbReference>
<dbReference type="PROSITE" id="PS00470">
    <property type="entry name" value="IDH_IMDH"/>
    <property type="match status" value="1"/>
</dbReference>
<reference key="1">
    <citation type="journal article" date="2005" name="Science">
        <title>Extensive DNA inversions in the B. fragilis genome control variable gene expression.</title>
        <authorList>
            <person name="Cerdeno-Tarraga A.-M."/>
            <person name="Patrick S."/>
            <person name="Crossman L.C."/>
            <person name="Blakely G."/>
            <person name="Abratt V."/>
            <person name="Lennard N."/>
            <person name="Poxton I."/>
            <person name="Duerden B."/>
            <person name="Harris B."/>
            <person name="Quail M.A."/>
            <person name="Barron A."/>
            <person name="Clark L."/>
            <person name="Corton C."/>
            <person name="Doggett J."/>
            <person name="Holden M.T.G."/>
            <person name="Larke N."/>
            <person name="Line A."/>
            <person name="Lord A."/>
            <person name="Norbertczak H."/>
            <person name="Ormond D."/>
            <person name="Price C."/>
            <person name="Rabbinowitsch E."/>
            <person name="Woodward J."/>
            <person name="Barrell B.G."/>
            <person name="Parkhill J."/>
        </authorList>
    </citation>
    <scope>NUCLEOTIDE SEQUENCE [LARGE SCALE GENOMIC DNA]</scope>
    <source>
        <strain>ATCC 25285 / DSM 2151 / CCUG 4856 / JCM 11019 / LMG 10263 / NCTC 9343 / Onslow / VPI 2553 / EN-2</strain>
    </source>
</reference>
<name>LEU3_BACFN</name>
<gene>
    <name evidence="1" type="primary">leuB</name>
    <name type="ordered locus">BF3263</name>
</gene>